<evidence type="ECO:0000255" key="1">
    <source>
        <dbReference type="HAMAP-Rule" id="MF_00607"/>
    </source>
</evidence>
<protein>
    <recommendedName>
        <fullName evidence="1">Ribosomal RNA small subunit methyltransferase A</fullName>
        <ecNumber evidence="1">2.1.1.182</ecNumber>
    </recommendedName>
    <alternativeName>
        <fullName evidence="1">16S rRNA (adenine(1518)-N(6)/adenine(1519)-N(6))-dimethyltransferase</fullName>
    </alternativeName>
    <alternativeName>
        <fullName evidence="1">16S rRNA dimethyladenosine transferase</fullName>
    </alternativeName>
    <alternativeName>
        <fullName evidence="1">16S rRNA dimethylase</fullName>
    </alternativeName>
    <alternativeName>
        <fullName evidence="1">S-adenosylmethionine-6-N', N'-adenosyl(rRNA) dimethyltransferase</fullName>
    </alternativeName>
</protein>
<comment type="function">
    <text evidence="1">Specifically dimethylates two adjacent adenosines (A1518 and A1519) in the loop of a conserved hairpin near the 3'-end of 16S rRNA in the 30S particle. May play a critical role in biogenesis of 30S subunits.</text>
</comment>
<comment type="catalytic activity">
    <reaction evidence="1">
        <text>adenosine(1518)/adenosine(1519) in 16S rRNA + 4 S-adenosyl-L-methionine = N(6)-dimethyladenosine(1518)/N(6)-dimethyladenosine(1519) in 16S rRNA + 4 S-adenosyl-L-homocysteine + 4 H(+)</text>
        <dbReference type="Rhea" id="RHEA:19609"/>
        <dbReference type="Rhea" id="RHEA-COMP:10232"/>
        <dbReference type="Rhea" id="RHEA-COMP:10233"/>
        <dbReference type="ChEBI" id="CHEBI:15378"/>
        <dbReference type="ChEBI" id="CHEBI:57856"/>
        <dbReference type="ChEBI" id="CHEBI:59789"/>
        <dbReference type="ChEBI" id="CHEBI:74411"/>
        <dbReference type="ChEBI" id="CHEBI:74493"/>
        <dbReference type="EC" id="2.1.1.182"/>
    </reaction>
</comment>
<comment type="subcellular location">
    <subcellularLocation>
        <location evidence="1">Cytoplasm</location>
    </subcellularLocation>
</comment>
<comment type="similarity">
    <text evidence="1">Belongs to the class I-like SAM-binding methyltransferase superfamily. rRNA adenine N(6)-methyltransferase family. RsmA subfamily.</text>
</comment>
<reference key="1">
    <citation type="journal article" date="2005" name="Nat. Genet.">
        <title>The complete genome sequence of Francisella tularensis, the causative agent of tularemia.</title>
        <authorList>
            <person name="Larsson P."/>
            <person name="Oyston P.C.F."/>
            <person name="Chain P."/>
            <person name="Chu M.C."/>
            <person name="Duffield M."/>
            <person name="Fuxelius H.-H."/>
            <person name="Garcia E."/>
            <person name="Haelltorp G."/>
            <person name="Johansson D."/>
            <person name="Isherwood K.E."/>
            <person name="Karp P.D."/>
            <person name="Larsson E."/>
            <person name="Liu Y."/>
            <person name="Michell S."/>
            <person name="Prior J."/>
            <person name="Prior R."/>
            <person name="Malfatti S."/>
            <person name="Sjoestedt A."/>
            <person name="Svensson K."/>
            <person name="Thompson N."/>
            <person name="Vergez L."/>
            <person name="Wagg J.K."/>
            <person name="Wren B.W."/>
            <person name="Lindler L.E."/>
            <person name="Andersson S.G.E."/>
            <person name="Forsman M."/>
            <person name="Titball R.W."/>
        </authorList>
    </citation>
    <scope>NUCLEOTIDE SEQUENCE [LARGE SCALE GENOMIC DNA]</scope>
    <source>
        <strain>SCHU S4 / Schu 4</strain>
    </source>
</reference>
<dbReference type="EC" id="2.1.1.182" evidence="1"/>
<dbReference type="EMBL" id="AJ749949">
    <property type="protein sequence ID" value="CAG45102.1"/>
    <property type="molecule type" value="Genomic_DNA"/>
</dbReference>
<dbReference type="RefSeq" id="WP_003020263.1">
    <property type="nucleotide sequence ID" value="NC_006570.2"/>
</dbReference>
<dbReference type="RefSeq" id="YP_169507.1">
    <property type="nucleotide sequence ID" value="NC_006570.2"/>
</dbReference>
<dbReference type="SMR" id="Q5NHI5"/>
<dbReference type="STRING" id="177416.FTT_0469"/>
<dbReference type="DNASU" id="3190742"/>
<dbReference type="EnsemblBacteria" id="CAG45102">
    <property type="protein sequence ID" value="CAG45102"/>
    <property type="gene ID" value="FTT_0469"/>
</dbReference>
<dbReference type="KEGG" id="ftu:FTT_0469"/>
<dbReference type="eggNOG" id="COG0030">
    <property type="taxonomic scope" value="Bacteria"/>
</dbReference>
<dbReference type="OrthoDB" id="9814755at2"/>
<dbReference type="Proteomes" id="UP000001174">
    <property type="component" value="Chromosome"/>
</dbReference>
<dbReference type="GO" id="GO:0005829">
    <property type="term" value="C:cytosol"/>
    <property type="evidence" value="ECO:0007669"/>
    <property type="project" value="TreeGrafter"/>
</dbReference>
<dbReference type="GO" id="GO:0052908">
    <property type="term" value="F:16S rRNA (adenine(1518)-N(6)/adenine(1519)-N(6))-dimethyltransferase activity"/>
    <property type="evidence" value="ECO:0007669"/>
    <property type="project" value="UniProtKB-EC"/>
</dbReference>
<dbReference type="GO" id="GO:0003723">
    <property type="term" value="F:RNA binding"/>
    <property type="evidence" value="ECO:0007669"/>
    <property type="project" value="UniProtKB-KW"/>
</dbReference>
<dbReference type="FunFam" id="1.10.8.100:FF:000001">
    <property type="entry name" value="Ribosomal RNA small subunit methyltransferase A"/>
    <property type="match status" value="1"/>
</dbReference>
<dbReference type="FunFam" id="3.40.50.150:FF:000023">
    <property type="entry name" value="Ribosomal RNA small subunit methyltransferase A"/>
    <property type="match status" value="1"/>
</dbReference>
<dbReference type="Gene3D" id="1.10.8.100">
    <property type="entry name" value="Ribosomal RNA adenine dimethylase-like, domain 2"/>
    <property type="match status" value="1"/>
</dbReference>
<dbReference type="Gene3D" id="3.40.50.150">
    <property type="entry name" value="Vaccinia Virus protein VP39"/>
    <property type="match status" value="1"/>
</dbReference>
<dbReference type="HAMAP" id="MF_00607">
    <property type="entry name" value="16SrRNA_methyltr_A"/>
    <property type="match status" value="1"/>
</dbReference>
<dbReference type="InterPro" id="IPR001737">
    <property type="entry name" value="KsgA/Erm"/>
</dbReference>
<dbReference type="InterPro" id="IPR023165">
    <property type="entry name" value="rRNA_Ade_diMease-like_C"/>
</dbReference>
<dbReference type="InterPro" id="IPR020596">
    <property type="entry name" value="rRNA_Ade_Mease_Trfase_CS"/>
</dbReference>
<dbReference type="InterPro" id="IPR020598">
    <property type="entry name" value="rRNA_Ade_methylase_Trfase_N"/>
</dbReference>
<dbReference type="InterPro" id="IPR011530">
    <property type="entry name" value="rRNA_adenine_dimethylase"/>
</dbReference>
<dbReference type="InterPro" id="IPR029063">
    <property type="entry name" value="SAM-dependent_MTases_sf"/>
</dbReference>
<dbReference type="NCBIfam" id="TIGR00755">
    <property type="entry name" value="ksgA"/>
    <property type="match status" value="1"/>
</dbReference>
<dbReference type="PANTHER" id="PTHR11727">
    <property type="entry name" value="DIMETHYLADENOSINE TRANSFERASE"/>
    <property type="match status" value="1"/>
</dbReference>
<dbReference type="PANTHER" id="PTHR11727:SF7">
    <property type="entry name" value="DIMETHYLADENOSINE TRANSFERASE-RELATED"/>
    <property type="match status" value="1"/>
</dbReference>
<dbReference type="Pfam" id="PF00398">
    <property type="entry name" value="RrnaAD"/>
    <property type="match status" value="1"/>
</dbReference>
<dbReference type="SMART" id="SM00650">
    <property type="entry name" value="rADc"/>
    <property type="match status" value="1"/>
</dbReference>
<dbReference type="SUPFAM" id="SSF53335">
    <property type="entry name" value="S-adenosyl-L-methionine-dependent methyltransferases"/>
    <property type="match status" value="1"/>
</dbReference>
<dbReference type="PROSITE" id="PS01131">
    <property type="entry name" value="RRNA_A_DIMETH"/>
    <property type="match status" value="1"/>
</dbReference>
<dbReference type="PROSITE" id="PS51689">
    <property type="entry name" value="SAM_RNA_A_N6_MT"/>
    <property type="match status" value="1"/>
</dbReference>
<organism>
    <name type="scientific">Francisella tularensis subsp. tularensis (strain SCHU S4 / Schu 4)</name>
    <dbReference type="NCBI Taxonomy" id="177416"/>
    <lineage>
        <taxon>Bacteria</taxon>
        <taxon>Pseudomonadati</taxon>
        <taxon>Pseudomonadota</taxon>
        <taxon>Gammaproteobacteria</taxon>
        <taxon>Thiotrichales</taxon>
        <taxon>Francisellaceae</taxon>
        <taxon>Francisella</taxon>
    </lineage>
</organism>
<proteinExistence type="inferred from homology"/>
<gene>
    <name evidence="1" type="primary">rsmA</name>
    <name evidence="1" type="synonym">ksgA</name>
    <name type="ordered locus">FTT_0469</name>
</gene>
<sequence>MQYKTKAKKSLGQNFLQDENIIRKIVQLANIKKHDIVVEIGPGLGALTRYLLSSSNNVSVVEFDASVIDTLIANCQKYGTPHIYNQDFLKFDISSLENSSNQKIKLIGNLPYNISSPILFKVIKDSDKIVDAHFMLQKEVVERIVSLPNSKSSGRLSVILQYHFDCSMILKIPPEVFYPQPKVDSAILRLKPKNSKELLKNYNFFEEIVKQSFAQRRKTLHNNLKSILKERKIDPSTLPVDTNLRAENLSVGDFVSLANFLS</sequence>
<keyword id="KW-0963">Cytoplasm</keyword>
<keyword id="KW-0489">Methyltransferase</keyword>
<keyword id="KW-1185">Reference proteome</keyword>
<keyword id="KW-0694">RNA-binding</keyword>
<keyword id="KW-0698">rRNA processing</keyword>
<keyword id="KW-0949">S-adenosyl-L-methionine</keyword>
<keyword id="KW-0808">Transferase</keyword>
<feature type="chain" id="PRO_0000101531" description="Ribosomal RNA small subunit methyltransferase A">
    <location>
        <begin position="1"/>
        <end position="262"/>
    </location>
</feature>
<feature type="binding site" evidence="1">
    <location>
        <position position="14"/>
    </location>
    <ligand>
        <name>S-adenosyl-L-methionine</name>
        <dbReference type="ChEBI" id="CHEBI:59789"/>
    </ligand>
</feature>
<feature type="binding site" evidence="1">
    <location>
        <position position="16"/>
    </location>
    <ligand>
        <name>S-adenosyl-L-methionine</name>
        <dbReference type="ChEBI" id="CHEBI:59789"/>
    </ligand>
</feature>
<feature type="binding site" evidence="1">
    <location>
        <position position="41"/>
    </location>
    <ligand>
        <name>S-adenosyl-L-methionine</name>
        <dbReference type="ChEBI" id="CHEBI:59789"/>
    </ligand>
</feature>
<feature type="binding site" evidence="1">
    <location>
        <position position="62"/>
    </location>
    <ligand>
        <name>S-adenosyl-L-methionine</name>
        <dbReference type="ChEBI" id="CHEBI:59789"/>
    </ligand>
</feature>
<feature type="binding site" evidence="1">
    <location>
        <position position="87"/>
    </location>
    <ligand>
        <name>S-adenosyl-L-methionine</name>
        <dbReference type="ChEBI" id="CHEBI:59789"/>
    </ligand>
</feature>
<feature type="binding site" evidence="1">
    <location>
        <position position="109"/>
    </location>
    <ligand>
        <name>S-adenosyl-L-methionine</name>
        <dbReference type="ChEBI" id="CHEBI:59789"/>
    </ligand>
</feature>
<name>RSMA_FRATT</name>
<accession>Q5NHI5</accession>